<keyword id="KW-0687">Ribonucleoprotein</keyword>
<keyword id="KW-0689">Ribosomal protein</keyword>
<keyword id="KW-0694">RNA-binding</keyword>
<keyword id="KW-0699">rRNA-binding</keyword>
<dbReference type="EMBL" id="CP001164">
    <property type="protein sequence ID" value="ACI36541.1"/>
    <property type="molecule type" value="Genomic_DNA"/>
</dbReference>
<dbReference type="RefSeq" id="WP_000729185.1">
    <property type="nucleotide sequence ID" value="NC_011353.1"/>
</dbReference>
<dbReference type="SMR" id="B5YTN0"/>
<dbReference type="GeneID" id="93778678"/>
<dbReference type="KEGG" id="ecf:ECH74115_4632"/>
<dbReference type="HOGENOM" id="CLU_093315_2_2_6"/>
<dbReference type="GO" id="GO:0005829">
    <property type="term" value="C:cytosol"/>
    <property type="evidence" value="ECO:0007669"/>
    <property type="project" value="UniProtKB-ARBA"/>
</dbReference>
<dbReference type="GO" id="GO:1990904">
    <property type="term" value="C:ribonucleoprotein complex"/>
    <property type="evidence" value="ECO:0007669"/>
    <property type="project" value="UniProtKB-KW"/>
</dbReference>
<dbReference type="GO" id="GO:0005840">
    <property type="term" value="C:ribosome"/>
    <property type="evidence" value="ECO:0007669"/>
    <property type="project" value="UniProtKB-KW"/>
</dbReference>
<dbReference type="GO" id="GO:0019843">
    <property type="term" value="F:rRNA binding"/>
    <property type="evidence" value="ECO:0007669"/>
    <property type="project" value="UniProtKB-UniRule"/>
</dbReference>
<dbReference type="GO" id="GO:0003735">
    <property type="term" value="F:structural constituent of ribosome"/>
    <property type="evidence" value="ECO:0007669"/>
    <property type="project" value="InterPro"/>
</dbReference>
<dbReference type="GO" id="GO:0006412">
    <property type="term" value="P:translation"/>
    <property type="evidence" value="ECO:0007669"/>
    <property type="project" value="UniProtKB-UniRule"/>
</dbReference>
<dbReference type="CDD" id="cd06089">
    <property type="entry name" value="KOW_RPL26"/>
    <property type="match status" value="1"/>
</dbReference>
<dbReference type="FunFam" id="2.30.30.30:FF:000004">
    <property type="entry name" value="50S ribosomal protein L24"/>
    <property type="match status" value="1"/>
</dbReference>
<dbReference type="Gene3D" id="2.30.30.30">
    <property type="match status" value="1"/>
</dbReference>
<dbReference type="HAMAP" id="MF_01326_B">
    <property type="entry name" value="Ribosomal_uL24_B"/>
    <property type="match status" value="1"/>
</dbReference>
<dbReference type="InterPro" id="IPR005824">
    <property type="entry name" value="KOW"/>
</dbReference>
<dbReference type="InterPro" id="IPR014722">
    <property type="entry name" value="Rib_uL2_dom2"/>
</dbReference>
<dbReference type="InterPro" id="IPR003256">
    <property type="entry name" value="Ribosomal_uL24"/>
</dbReference>
<dbReference type="InterPro" id="IPR005825">
    <property type="entry name" value="Ribosomal_uL24_CS"/>
</dbReference>
<dbReference type="InterPro" id="IPR041988">
    <property type="entry name" value="Ribosomal_uL24_KOW"/>
</dbReference>
<dbReference type="InterPro" id="IPR008991">
    <property type="entry name" value="Translation_prot_SH3-like_sf"/>
</dbReference>
<dbReference type="NCBIfam" id="TIGR01079">
    <property type="entry name" value="rplX_bact"/>
    <property type="match status" value="1"/>
</dbReference>
<dbReference type="PANTHER" id="PTHR12903">
    <property type="entry name" value="MITOCHONDRIAL RIBOSOMAL PROTEIN L24"/>
    <property type="match status" value="1"/>
</dbReference>
<dbReference type="Pfam" id="PF00467">
    <property type="entry name" value="KOW"/>
    <property type="match status" value="1"/>
</dbReference>
<dbReference type="Pfam" id="PF17136">
    <property type="entry name" value="ribosomal_L24"/>
    <property type="match status" value="1"/>
</dbReference>
<dbReference type="SMART" id="SM00739">
    <property type="entry name" value="KOW"/>
    <property type="match status" value="1"/>
</dbReference>
<dbReference type="SUPFAM" id="SSF50104">
    <property type="entry name" value="Translation proteins SH3-like domain"/>
    <property type="match status" value="1"/>
</dbReference>
<dbReference type="PROSITE" id="PS01108">
    <property type="entry name" value="RIBOSOMAL_L24"/>
    <property type="match status" value="1"/>
</dbReference>
<accession>B5YTN0</accession>
<gene>
    <name evidence="1" type="primary">rplX</name>
    <name type="ordered locus">ECH74115_4632</name>
</gene>
<comment type="function">
    <text evidence="1">One of two assembly initiator proteins, it binds directly to the 5'-end of the 23S rRNA, where it nucleates assembly of the 50S subunit.</text>
</comment>
<comment type="function">
    <text evidence="1">One of the proteins that surrounds the polypeptide exit tunnel on the outside of the subunit.</text>
</comment>
<comment type="subunit">
    <text evidence="1">Part of the 50S ribosomal subunit.</text>
</comment>
<comment type="similarity">
    <text evidence="1">Belongs to the universal ribosomal protein uL24 family.</text>
</comment>
<sequence length="104" mass="11316">MAAKIRRDDEVIVLTGKDKGKRGKVKNVLSSGKVIVEGINLVKKHQKPVPALNQPGGIVEKEAAIQVSNVAIFNAATGKADRVGFRFEDGKKVRFFKSNSETIK</sequence>
<reference key="1">
    <citation type="journal article" date="2011" name="Proc. Natl. Acad. Sci. U.S.A.">
        <title>Genomic anatomy of Escherichia coli O157:H7 outbreaks.</title>
        <authorList>
            <person name="Eppinger M."/>
            <person name="Mammel M.K."/>
            <person name="Leclerc J.E."/>
            <person name="Ravel J."/>
            <person name="Cebula T.A."/>
        </authorList>
    </citation>
    <scope>NUCLEOTIDE SEQUENCE [LARGE SCALE GENOMIC DNA]</scope>
    <source>
        <strain>EC4115 / EHEC</strain>
    </source>
</reference>
<protein>
    <recommendedName>
        <fullName evidence="1">Large ribosomal subunit protein uL24</fullName>
    </recommendedName>
    <alternativeName>
        <fullName evidence="2">50S ribosomal protein L24</fullName>
    </alternativeName>
</protein>
<organism>
    <name type="scientific">Escherichia coli O157:H7 (strain EC4115 / EHEC)</name>
    <dbReference type="NCBI Taxonomy" id="444450"/>
    <lineage>
        <taxon>Bacteria</taxon>
        <taxon>Pseudomonadati</taxon>
        <taxon>Pseudomonadota</taxon>
        <taxon>Gammaproteobacteria</taxon>
        <taxon>Enterobacterales</taxon>
        <taxon>Enterobacteriaceae</taxon>
        <taxon>Escherichia</taxon>
    </lineage>
</organism>
<feature type="chain" id="PRO_1000141990" description="Large ribosomal subunit protein uL24">
    <location>
        <begin position="1"/>
        <end position="104"/>
    </location>
</feature>
<name>RL24_ECO5E</name>
<evidence type="ECO:0000255" key="1">
    <source>
        <dbReference type="HAMAP-Rule" id="MF_01326"/>
    </source>
</evidence>
<evidence type="ECO:0000305" key="2"/>
<proteinExistence type="inferred from homology"/>